<feature type="chain" id="PRO_1000147997" description="Probable glycine dehydrogenase (decarboxylating) subunit 2">
    <location>
        <begin position="1"/>
        <end position="491"/>
    </location>
</feature>
<feature type="modified residue" description="N6-(pyridoxal phosphate)lysine" evidence="1">
    <location>
        <position position="273"/>
    </location>
</feature>
<name>GCSPB_BACC3</name>
<protein>
    <recommendedName>
        <fullName evidence="1">Probable glycine dehydrogenase (decarboxylating) subunit 2</fullName>
        <ecNumber evidence="1">1.4.4.2</ecNumber>
    </recommendedName>
    <alternativeName>
        <fullName evidence="1">Glycine cleavage system P-protein subunit 2</fullName>
    </alternativeName>
    <alternativeName>
        <fullName evidence="1">Glycine decarboxylase subunit 2</fullName>
    </alternativeName>
    <alternativeName>
        <fullName evidence="1">Glycine dehydrogenase (aminomethyl-transferring) subunit 2</fullName>
    </alternativeName>
</protein>
<evidence type="ECO:0000255" key="1">
    <source>
        <dbReference type="HAMAP-Rule" id="MF_00713"/>
    </source>
</evidence>
<sequence length="491" mass="54865">MKNQDQALIFEVSKEGRIGYSLPKLDVEEVKLEDVFESDYIRVEDAELPEVSELDIMRHYTALSNRNHGVDSGFYPLGSCTMKYNPKINESVARFAGFANIHPLQDEKTVQGAMELMYDLQEHLIEITGMDTVTLQPAAGAHGEWTGLMLIRAYHEANGDFNRTKVIVPDSAHGTNPASATVAGFETITVKSNEHGLVDLEDLKRVVNEETAALMLTNPNTLGLFEENILEMAEIVHNAGGKLYYDGANLNAVLSQARPGDMGFDVVHLNLHKTFTGPHGGGGPGSGPVGVKADLIPYLPKPILEKTENGYHFNYDRPEAIGRVKPFYGNFGINVRAYTYIRSMGPDGLRAVTEYAVLNANYMMRRLAPFYDLPFDRHCKHEFVLSGRRQKKLGVRTLDIAKRLLDFGYHPPTIYFPLNVEECIMIEPTETESKETLDGFIDKMIQIAKEVEENPEVVQEAPHTTVIKRLDETMAARKPVLRYAKPAPVQV</sequence>
<proteinExistence type="inferred from homology"/>
<accession>C1ERU8</accession>
<keyword id="KW-0560">Oxidoreductase</keyword>
<keyword id="KW-0663">Pyridoxal phosphate</keyword>
<reference key="1">
    <citation type="submission" date="2009-02" db="EMBL/GenBank/DDBJ databases">
        <title>Genome sequence of Bacillus cereus 03BB102.</title>
        <authorList>
            <person name="Dodson R.J."/>
            <person name="Jackson P."/>
            <person name="Munk A.C."/>
            <person name="Brettin T."/>
            <person name="Bruce D."/>
            <person name="Detter C."/>
            <person name="Tapia R."/>
            <person name="Han C."/>
            <person name="Sutton G."/>
            <person name="Sims D."/>
        </authorList>
    </citation>
    <scope>NUCLEOTIDE SEQUENCE [LARGE SCALE GENOMIC DNA]</scope>
    <source>
        <strain>03BB102</strain>
    </source>
</reference>
<dbReference type="EC" id="1.4.4.2" evidence="1"/>
<dbReference type="EMBL" id="CP001407">
    <property type="protein sequence ID" value="ACO29753.1"/>
    <property type="molecule type" value="Genomic_DNA"/>
</dbReference>
<dbReference type="RefSeq" id="WP_000795698.1">
    <property type="nucleotide sequence ID" value="NZ_CP009318.1"/>
</dbReference>
<dbReference type="SMR" id="C1ERU8"/>
<dbReference type="GeneID" id="93006875"/>
<dbReference type="KEGG" id="bcx:BCA_4334"/>
<dbReference type="PATRIC" id="fig|572264.18.peg.4286"/>
<dbReference type="Proteomes" id="UP000002210">
    <property type="component" value="Chromosome"/>
</dbReference>
<dbReference type="GO" id="GO:0005829">
    <property type="term" value="C:cytosol"/>
    <property type="evidence" value="ECO:0007669"/>
    <property type="project" value="TreeGrafter"/>
</dbReference>
<dbReference type="GO" id="GO:0005960">
    <property type="term" value="C:glycine cleavage complex"/>
    <property type="evidence" value="ECO:0007669"/>
    <property type="project" value="TreeGrafter"/>
</dbReference>
<dbReference type="GO" id="GO:0016594">
    <property type="term" value="F:glycine binding"/>
    <property type="evidence" value="ECO:0007669"/>
    <property type="project" value="TreeGrafter"/>
</dbReference>
<dbReference type="GO" id="GO:0004375">
    <property type="term" value="F:glycine dehydrogenase (decarboxylating) activity"/>
    <property type="evidence" value="ECO:0007669"/>
    <property type="project" value="UniProtKB-EC"/>
</dbReference>
<dbReference type="GO" id="GO:0030170">
    <property type="term" value="F:pyridoxal phosphate binding"/>
    <property type="evidence" value="ECO:0007669"/>
    <property type="project" value="TreeGrafter"/>
</dbReference>
<dbReference type="GO" id="GO:0019464">
    <property type="term" value="P:glycine decarboxylation via glycine cleavage system"/>
    <property type="evidence" value="ECO:0007669"/>
    <property type="project" value="UniProtKB-UniRule"/>
</dbReference>
<dbReference type="CDD" id="cd00613">
    <property type="entry name" value="GDC-P"/>
    <property type="match status" value="1"/>
</dbReference>
<dbReference type="FunFam" id="3.40.640.10:FF:000034">
    <property type="entry name" value="Probable glycine dehydrogenase (decarboxylating) subunit 2"/>
    <property type="match status" value="1"/>
</dbReference>
<dbReference type="FunFam" id="3.90.1150.10:FF:000014">
    <property type="entry name" value="Probable glycine dehydrogenase (decarboxylating) subunit 2"/>
    <property type="match status" value="1"/>
</dbReference>
<dbReference type="Gene3D" id="6.20.440.10">
    <property type="match status" value="1"/>
</dbReference>
<dbReference type="Gene3D" id="3.90.1150.10">
    <property type="entry name" value="Aspartate Aminotransferase, domain 1"/>
    <property type="match status" value="1"/>
</dbReference>
<dbReference type="Gene3D" id="3.40.640.10">
    <property type="entry name" value="Type I PLP-dependent aspartate aminotransferase-like (Major domain)"/>
    <property type="match status" value="1"/>
</dbReference>
<dbReference type="HAMAP" id="MF_00713">
    <property type="entry name" value="GcvPB"/>
    <property type="match status" value="1"/>
</dbReference>
<dbReference type="InterPro" id="IPR023012">
    <property type="entry name" value="GcvPB"/>
</dbReference>
<dbReference type="InterPro" id="IPR049316">
    <property type="entry name" value="GDC-P_C"/>
</dbReference>
<dbReference type="InterPro" id="IPR049315">
    <property type="entry name" value="GDC-P_N"/>
</dbReference>
<dbReference type="InterPro" id="IPR020581">
    <property type="entry name" value="GDC_P"/>
</dbReference>
<dbReference type="InterPro" id="IPR015424">
    <property type="entry name" value="PyrdxlP-dep_Trfase"/>
</dbReference>
<dbReference type="InterPro" id="IPR015421">
    <property type="entry name" value="PyrdxlP-dep_Trfase_major"/>
</dbReference>
<dbReference type="InterPro" id="IPR015422">
    <property type="entry name" value="PyrdxlP-dep_Trfase_small"/>
</dbReference>
<dbReference type="NCBIfam" id="NF003346">
    <property type="entry name" value="PRK04366.1"/>
    <property type="match status" value="1"/>
</dbReference>
<dbReference type="PANTHER" id="PTHR11773:SF1">
    <property type="entry name" value="GLYCINE DEHYDROGENASE (DECARBOXYLATING), MITOCHONDRIAL"/>
    <property type="match status" value="1"/>
</dbReference>
<dbReference type="PANTHER" id="PTHR11773">
    <property type="entry name" value="GLYCINE DEHYDROGENASE, DECARBOXYLATING"/>
    <property type="match status" value="1"/>
</dbReference>
<dbReference type="Pfam" id="PF21478">
    <property type="entry name" value="GcvP2_C"/>
    <property type="match status" value="1"/>
</dbReference>
<dbReference type="Pfam" id="PF02347">
    <property type="entry name" value="GDC-P"/>
    <property type="match status" value="1"/>
</dbReference>
<dbReference type="SUPFAM" id="SSF53383">
    <property type="entry name" value="PLP-dependent transferases"/>
    <property type="match status" value="1"/>
</dbReference>
<organism>
    <name type="scientific">Bacillus cereus (strain 03BB102)</name>
    <dbReference type="NCBI Taxonomy" id="572264"/>
    <lineage>
        <taxon>Bacteria</taxon>
        <taxon>Bacillati</taxon>
        <taxon>Bacillota</taxon>
        <taxon>Bacilli</taxon>
        <taxon>Bacillales</taxon>
        <taxon>Bacillaceae</taxon>
        <taxon>Bacillus</taxon>
        <taxon>Bacillus cereus group</taxon>
    </lineage>
</organism>
<comment type="function">
    <text evidence="1">The glycine cleavage system catalyzes the degradation of glycine. The P protein binds the alpha-amino group of glycine through its pyridoxal phosphate cofactor; CO(2) is released and the remaining methylamine moiety is then transferred to the lipoamide cofactor of the H protein.</text>
</comment>
<comment type="catalytic activity">
    <reaction evidence="1">
        <text>N(6)-[(R)-lipoyl]-L-lysyl-[glycine-cleavage complex H protein] + glycine + H(+) = N(6)-[(R)-S(8)-aminomethyldihydrolipoyl]-L-lysyl-[glycine-cleavage complex H protein] + CO2</text>
        <dbReference type="Rhea" id="RHEA:24304"/>
        <dbReference type="Rhea" id="RHEA-COMP:10494"/>
        <dbReference type="Rhea" id="RHEA-COMP:10495"/>
        <dbReference type="ChEBI" id="CHEBI:15378"/>
        <dbReference type="ChEBI" id="CHEBI:16526"/>
        <dbReference type="ChEBI" id="CHEBI:57305"/>
        <dbReference type="ChEBI" id="CHEBI:83099"/>
        <dbReference type="ChEBI" id="CHEBI:83143"/>
        <dbReference type="EC" id="1.4.4.2"/>
    </reaction>
</comment>
<comment type="cofactor">
    <cofactor evidence="1">
        <name>pyridoxal 5'-phosphate</name>
        <dbReference type="ChEBI" id="CHEBI:597326"/>
    </cofactor>
</comment>
<comment type="subunit">
    <text evidence="1">The glycine cleavage system is composed of four proteins: P, T, L and H. In this organism, the P 'protein' is a heterodimer of two subunits.</text>
</comment>
<comment type="similarity">
    <text evidence="1">Belongs to the GcvP family. C-terminal subunit subfamily.</text>
</comment>
<gene>
    <name evidence="1" type="primary">gcvPB</name>
    <name type="ordered locus">BCA_4334</name>
</gene>